<dbReference type="EC" id="6.3.5.3" evidence="1"/>
<dbReference type="EMBL" id="CP000767">
    <property type="protein sequence ID" value="EAU00302.1"/>
    <property type="molecule type" value="Genomic_DNA"/>
</dbReference>
<dbReference type="RefSeq" id="WP_011992388.1">
    <property type="nucleotide sequence ID" value="NC_009715.2"/>
</dbReference>
<dbReference type="SMR" id="A7GYY9"/>
<dbReference type="STRING" id="360105.CCV52592_1835"/>
<dbReference type="KEGG" id="ccv:CCV52592_1835"/>
<dbReference type="HOGENOM" id="CLU_003100_0_1_7"/>
<dbReference type="OrthoDB" id="9804441at2"/>
<dbReference type="UniPathway" id="UPA00074">
    <property type="reaction ID" value="UER00128"/>
</dbReference>
<dbReference type="Proteomes" id="UP000006380">
    <property type="component" value="Chromosome"/>
</dbReference>
<dbReference type="GO" id="GO:0005737">
    <property type="term" value="C:cytoplasm"/>
    <property type="evidence" value="ECO:0007669"/>
    <property type="project" value="UniProtKB-SubCell"/>
</dbReference>
<dbReference type="GO" id="GO:0005524">
    <property type="term" value="F:ATP binding"/>
    <property type="evidence" value="ECO:0007669"/>
    <property type="project" value="UniProtKB-UniRule"/>
</dbReference>
<dbReference type="GO" id="GO:0000287">
    <property type="term" value="F:magnesium ion binding"/>
    <property type="evidence" value="ECO:0007669"/>
    <property type="project" value="UniProtKB-UniRule"/>
</dbReference>
<dbReference type="GO" id="GO:0004642">
    <property type="term" value="F:phosphoribosylformylglycinamidine synthase activity"/>
    <property type="evidence" value="ECO:0007669"/>
    <property type="project" value="UniProtKB-UniRule"/>
</dbReference>
<dbReference type="GO" id="GO:0006189">
    <property type="term" value="P:'de novo' IMP biosynthetic process"/>
    <property type="evidence" value="ECO:0007669"/>
    <property type="project" value="UniProtKB-UniRule"/>
</dbReference>
<dbReference type="CDD" id="cd02203">
    <property type="entry name" value="PurL_repeat1"/>
    <property type="match status" value="1"/>
</dbReference>
<dbReference type="CDD" id="cd02204">
    <property type="entry name" value="PurL_repeat2"/>
    <property type="match status" value="1"/>
</dbReference>
<dbReference type="FunFam" id="3.30.1330.10:FF:000004">
    <property type="entry name" value="Phosphoribosylformylglycinamidine synthase subunit PurL"/>
    <property type="match status" value="1"/>
</dbReference>
<dbReference type="Gene3D" id="3.90.650.10">
    <property type="entry name" value="PurM-like C-terminal domain"/>
    <property type="match status" value="2"/>
</dbReference>
<dbReference type="Gene3D" id="3.30.1330.10">
    <property type="entry name" value="PurM-like, N-terminal domain"/>
    <property type="match status" value="2"/>
</dbReference>
<dbReference type="HAMAP" id="MF_00420">
    <property type="entry name" value="PurL_2"/>
    <property type="match status" value="1"/>
</dbReference>
<dbReference type="InterPro" id="IPR010074">
    <property type="entry name" value="PRibForGlyAmidine_synth_PurL"/>
</dbReference>
<dbReference type="InterPro" id="IPR041609">
    <property type="entry name" value="PurL_linker"/>
</dbReference>
<dbReference type="InterPro" id="IPR010918">
    <property type="entry name" value="PurM-like_C_dom"/>
</dbReference>
<dbReference type="InterPro" id="IPR036676">
    <property type="entry name" value="PurM-like_C_sf"/>
</dbReference>
<dbReference type="InterPro" id="IPR016188">
    <property type="entry name" value="PurM-like_N"/>
</dbReference>
<dbReference type="InterPro" id="IPR036921">
    <property type="entry name" value="PurM-like_N_sf"/>
</dbReference>
<dbReference type="NCBIfam" id="TIGR01736">
    <property type="entry name" value="FGAM_synth_II"/>
    <property type="match status" value="1"/>
</dbReference>
<dbReference type="NCBIfam" id="NF002290">
    <property type="entry name" value="PRK01213.1"/>
    <property type="match status" value="1"/>
</dbReference>
<dbReference type="PANTHER" id="PTHR43555">
    <property type="entry name" value="PHOSPHORIBOSYLFORMYLGLYCINAMIDINE SYNTHASE SUBUNIT PURL"/>
    <property type="match status" value="1"/>
</dbReference>
<dbReference type="PANTHER" id="PTHR43555:SF1">
    <property type="entry name" value="PHOSPHORIBOSYLFORMYLGLYCINAMIDINE SYNTHASE SUBUNIT PURL"/>
    <property type="match status" value="1"/>
</dbReference>
<dbReference type="Pfam" id="PF00586">
    <property type="entry name" value="AIRS"/>
    <property type="match status" value="2"/>
</dbReference>
<dbReference type="Pfam" id="PF02769">
    <property type="entry name" value="AIRS_C"/>
    <property type="match status" value="2"/>
</dbReference>
<dbReference type="Pfam" id="PF18072">
    <property type="entry name" value="FGAR-AT_linker"/>
    <property type="match status" value="1"/>
</dbReference>
<dbReference type="PIRSF" id="PIRSF001587">
    <property type="entry name" value="FGAM_synthase_II"/>
    <property type="match status" value="1"/>
</dbReference>
<dbReference type="SUPFAM" id="SSF56042">
    <property type="entry name" value="PurM C-terminal domain-like"/>
    <property type="match status" value="2"/>
</dbReference>
<dbReference type="SUPFAM" id="SSF55326">
    <property type="entry name" value="PurM N-terminal domain-like"/>
    <property type="match status" value="2"/>
</dbReference>
<proteinExistence type="inferred from homology"/>
<name>PURL_CAMC5</name>
<protein>
    <recommendedName>
        <fullName evidence="1">Phosphoribosylformylglycinamidine synthase subunit PurL</fullName>
        <shortName evidence="1">FGAM synthase</shortName>
        <ecNumber evidence="1">6.3.5.3</ecNumber>
    </recommendedName>
    <alternativeName>
        <fullName evidence="1">Formylglycinamide ribonucleotide amidotransferase subunit II</fullName>
        <shortName evidence="1">FGAR amidotransferase II</shortName>
        <shortName evidence="1">FGAR-AT II</shortName>
    </alternativeName>
    <alternativeName>
        <fullName evidence="1">Glutamine amidotransferase PurL</fullName>
    </alternativeName>
    <alternativeName>
        <fullName evidence="1">Phosphoribosylformylglycinamidine synthase subunit II</fullName>
    </alternativeName>
</protein>
<evidence type="ECO:0000255" key="1">
    <source>
        <dbReference type="HAMAP-Rule" id="MF_00420"/>
    </source>
</evidence>
<organism>
    <name type="scientific">Campylobacter curvus (strain 525.92)</name>
    <dbReference type="NCBI Taxonomy" id="360105"/>
    <lineage>
        <taxon>Bacteria</taxon>
        <taxon>Pseudomonadati</taxon>
        <taxon>Campylobacterota</taxon>
        <taxon>Epsilonproteobacteria</taxon>
        <taxon>Campylobacterales</taxon>
        <taxon>Campylobacteraceae</taxon>
        <taxon>Campylobacter</taxon>
    </lineage>
</organism>
<feature type="chain" id="PRO_1000050302" description="Phosphoribosylformylglycinamidine synthase subunit PurL">
    <location>
        <begin position="1"/>
        <end position="729"/>
    </location>
</feature>
<feature type="active site" evidence="1">
    <location>
        <position position="42"/>
    </location>
</feature>
<feature type="active site" description="Proton acceptor" evidence="1">
    <location>
        <position position="88"/>
    </location>
</feature>
<feature type="binding site" evidence="1">
    <location>
        <position position="45"/>
    </location>
    <ligand>
        <name>ATP</name>
        <dbReference type="ChEBI" id="CHEBI:30616"/>
    </ligand>
</feature>
<feature type="binding site" evidence="1">
    <location>
        <position position="84"/>
    </location>
    <ligand>
        <name>ATP</name>
        <dbReference type="ChEBI" id="CHEBI:30616"/>
    </ligand>
</feature>
<feature type="binding site" evidence="1">
    <location>
        <position position="86"/>
    </location>
    <ligand>
        <name>Mg(2+)</name>
        <dbReference type="ChEBI" id="CHEBI:18420"/>
        <label>1</label>
    </ligand>
</feature>
<feature type="binding site" evidence="1">
    <location>
        <begin position="87"/>
        <end position="90"/>
    </location>
    <ligand>
        <name>substrate</name>
    </ligand>
</feature>
<feature type="binding site" evidence="1">
    <location>
        <position position="109"/>
    </location>
    <ligand>
        <name>substrate</name>
    </ligand>
</feature>
<feature type="binding site" evidence="1">
    <location>
        <position position="110"/>
    </location>
    <ligand>
        <name>Mg(2+)</name>
        <dbReference type="ChEBI" id="CHEBI:18420"/>
        <label>2</label>
    </ligand>
</feature>
<feature type="binding site" evidence="1">
    <location>
        <position position="238"/>
    </location>
    <ligand>
        <name>substrate</name>
    </ligand>
</feature>
<feature type="binding site" evidence="1">
    <location>
        <position position="266"/>
    </location>
    <ligand>
        <name>Mg(2+)</name>
        <dbReference type="ChEBI" id="CHEBI:18420"/>
        <label>2</label>
    </ligand>
</feature>
<feature type="binding site" evidence="1">
    <location>
        <begin position="310"/>
        <end position="312"/>
    </location>
    <ligand>
        <name>substrate</name>
    </ligand>
</feature>
<feature type="binding site" evidence="1">
    <location>
        <position position="492"/>
    </location>
    <ligand>
        <name>ATP</name>
        <dbReference type="ChEBI" id="CHEBI:30616"/>
    </ligand>
</feature>
<feature type="binding site" evidence="1">
    <location>
        <position position="529"/>
    </location>
    <ligand>
        <name>ATP</name>
        <dbReference type="ChEBI" id="CHEBI:30616"/>
    </ligand>
</feature>
<feature type="binding site" evidence="1">
    <location>
        <position position="530"/>
    </location>
    <ligand>
        <name>Mg(2+)</name>
        <dbReference type="ChEBI" id="CHEBI:18420"/>
        <label>1</label>
    </ligand>
</feature>
<feature type="binding site" evidence="1">
    <location>
        <position position="532"/>
    </location>
    <ligand>
        <name>substrate</name>
    </ligand>
</feature>
<sequence>MDKATIKAHKINEQEYEEILKILGREPNLLELGIFSAMWSEHCSYKSSKKYLNGFPTKAPWVIQGPGENAGVIDVGGGVAAVFKMESHNHPSFIEPFQGAATGVGGILRDVFTMGARVVANMNSLRFGEVCGDSENARKQRYLLKGAVAGIGHYGNCMGIPTVGGETTFDASFNGNILVNAFALGLVKSDEIFYGKAEGIGNPVIYVGSKTGRDGLGGAVMASDSFSDANKSLRPTVQVGDPFAEKLLMEACLELFKKDYIVGIQDMGAAGLTSSSFEMAGRSGSGMKMQLDRVPMREEGMSPYELMLSESQERMLICAKKGCEQKVLEIFKKWDLDAEVIGEVTDSGQMQLYWHGELVGQIPIKPLSEAAPVLDRPTARPKYLDEIKNLQIPKDIDNKTAFLKLLRESEILNKALIYDQYDANIQTNTIKQPGYLGAAVIRIKETGKALAMAAQCDPRANFVGPKIGAARAVAAAGRKVAMSGAMPLAITDCLNYGNPQNPEVMWQFAQGCEGIKEACRELNTPVVSGNVSLYNDTDGVSVYPTPAIVSVGVNDDARANLKSVFGSAGTAIYLLGETKGEFAASLYVKALFDVVGGTLSEIDYKKERALWELVIAANKAGVLEFANSVGVGGVAMSLAKMACISGIGAECKFDVAQANFIFDESFSRALVGVTSEAKFSELAAKFGVKFEKIGVTGGDKFRLNEIDENLKEISEIYFNEFANIIKQED</sequence>
<keyword id="KW-0067">ATP-binding</keyword>
<keyword id="KW-0963">Cytoplasm</keyword>
<keyword id="KW-0436">Ligase</keyword>
<keyword id="KW-0460">Magnesium</keyword>
<keyword id="KW-0479">Metal-binding</keyword>
<keyword id="KW-0547">Nucleotide-binding</keyword>
<keyword id="KW-0658">Purine biosynthesis</keyword>
<keyword id="KW-1185">Reference proteome</keyword>
<gene>
    <name evidence="1" type="primary">purL</name>
    <name type="ordered locus">Ccur92_11270</name>
    <name type="ORF">CCV52592_1835</name>
</gene>
<accession>A7GYY9</accession>
<comment type="function">
    <text evidence="1">Part of the phosphoribosylformylglycinamidine synthase complex involved in the purines biosynthetic pathway. Catalyzes the ATP-dependent conversion of formylglycinamide ribonucleotide (FGAR) and glutamine to yield formylglycinamidine ribonucleotide (FGAM) and glutamate. The FGAM synthase complex is composed of three subunits. PurQ produces an ammonia molecule by converting glutamine to glutamate. PurL transfers the ammonia molecule to FGAR to form FGAM in an ATP-dependent manner. PurS interacts with PurQ and PurL and is thought to assist in the transfer of the ammonia molecule from PurQ to PurL.</text>
</comment>
<comment type="catalytic activity">
    <reaction evidence="1">
        <text>N(2)-formyl-N(1)-(5-phospho-beta-D-ribosyl)glycinamide + L-glutamine + ATP + H2O = 2-formamido-N(1)-(5-O-phospho-beta-D-ribosyl)acetamidine + L-glutamate + ADP + phosphate + H(+)</text>
        <dbReference type="Rhea" id="RHEA:17129"/>
        <dbReference type="ChEBI" id="CHEBI:15377"/>
        <dbReference type="ChEBI" id="CHEBI:15378"/>
        <dbReference type="ChEBI" id="CHEBI:29985"/>
        <dbReference type="ChEBI" id="CHEBI:30616"/>
        <dbReference type="ChEBI" id="CHEBI:43474"/>
        <dbReference type="ChEBI" id="CHEBI:58359"/>
        <dbReference type="ChEBI" id="CHEBI:147286"/>
        <dbReference type="ChEBI" id="CHEBI:147287"/>
        <dbReference type="ChEBI" id="CHEBI:456216"/>
        <dbReference type="EC" id="6.3.5.3"/>
    </reaction>
</comment>
<comment type="pathway">
    <text evidence="1">Purine metabolism; IMP biosynthesis via de novo pathway; 5-amino-1-(5-phospho-D-ribosyl)imidazole from N(2)-formyl-N(1)-(5-phospho-D-ribosyl)glycinamide: step 1/2.</text>
</comment>
<comment type="subunit">
    <text evidence="1">Monomer. Part of the FGAM synthase complex composed of 1 PurL, 1 PurQ and 2 PurS subunits.</text>
</comment>
<comment type="subcellular location">
    <subcellularLocation>
        <location evidence="1">Cytoplasm</location>
    </subcellularLocation>
</comment>
<comment type="similarity">
    <text evidence="1">Belongs to the FGAMS family.</text>
</comment>
<reference key="1">
    <citation type="submission" date="2007-07" db="EMBL/GenBank/DDBJ databases">
        <title>Genome sequence of Campylobacter curvus 525.92 isolated from human feces.</title>
        <authorList>
            <person name="Fouts D.E."/>
            <person name="Mongodin E.F."/>
            <person name="Puiu D."/>
            <person name="Sebastian Y."/>
            <person name="Miller W.G."/>
            <person name="Mandrell R.E."/>
            <person name="Lastovica A.J."/>
            <person name="Nelson K.E."/>
        </authorList>
    </citation>
    <scope>NUCLEOTIDE SEQUENCE [LARGE SCALE GENOMIC DNA]</scope>
    <source>
        <strain>525.92</strain>
    </source>
</reference>